<comment type="function">
    <text evidence="1">Catalyzes the initial step of the lipid cycle reactions in the biosynthesis of the cell wall peptidoglycan: transfers peptidoglycan precursor phospho-MurNAc-pentapeptide from UDP-MurNAc-pentapeptide onto the lipid carrier undecaprenyl phosphate, yielding undecaprenyl-pyrophosphoryl-MurNAc-pentapeptide, known as lipid I.</text>
</comment>
<comment type="catalytic activity">
    <reaction evidence="1">
        <text>UDP-N-acetyl-alpha-D-muramoyl-L-alanyl-gamma-D-glutamyl-meso-2,6-diaminopimeloyl-D-alanyl-D-alanine + di-trans,octa-cis-undecaprenyl phosphate = di-trans,octa-cis-undecaprenyl diphospho-N-acetyl-alpha-D-muramoyl-L-alanyl-D-glutamyl-meso-2,6-diaminopimeloyl-D-alanyl-D-alanine + UMP</text>
        <dbReference type="Rhea" id="RHEA:28386"/>
        <dbReference type="ChEBI" id="CHEBI:57865"/>
        <dbReference type="ChEBI" id="CHEBI:60392"/>
        <dbReference type="ChEBI" id="CHEBI:61386"/>
        <dbReference type="ChEBI" id="CHEBI:61387"/>
        <dbReference type="EC" id="2.7.8.13"/>
    </reaction>
</comment>
<comment type="cofactor">
    <cofactor evidence="1">
        <name>Mg(2+)</name>
        <dbReference type="ChEBI" id="CHEBI:18420"/>
    </cofactor>
</comment>
<comment type="pathway">
    <text evidence="1">Cell wall biogenesis; peptidoglycan biosynthesis.</text>
</comment>
<comment type="subcellular location">
    <subcellularLocation>
        <location evidence="1">Cell inner membrane</location>
        <topology evidence="1">Multi-pass membrane protein</topology>
    </subcellularLocation>
</comment>
<comment type="similarity">
    <text evidence="1">Belongs to the glycosyltransferase 4 family. MraY subfamily.</text>
</comment>
<sequence>MILFAIDYLERVWTLKVPSVFSYYSTRMILAAITSLLLSIFLGPYFIRKLYELKIGQSIRKEDCPLLGQLHEKKQNTPTMGGILILSSMLVSLVLWMDLTHIFTLILFVTTVFLGLIGGRDDYLKLKYKNTKGMSARGKLFFQFVLSAAIASYFLLSSVNEMFEKWTWFQPPVIKEQIVVKNSETLQEMPSQTKSISLKEYASRLYIPFFKEPVVTFGGISLILMAFFIFFVITGSSNAANLTDGLDGLLAGCLVTAAGSLCLIAFVSNHVDIARYLNILYIEGSGEIAIYLCALIGASLGFLWYNGYPAQVFMGDTGSLTLGGILGVSAVLLRREFLLGIVGGIFVAEALSVILQVASYRLRNKKRIFLCAPLHHHFEYKGWPETKVVIRFWIMSLLFAIIGIASLKFQ</sequence>
<name>MRAY_PARUW</name>
<protein>
    <recommendedName>
        <fullName evidence="1">Phospho-N-acetylmuramoyl-pentapeptide-transferase</fullName>
        <ecNumber evidence="1">2.7.8.13</ecNumber>
    </recommendedName>
    <alternativeName>
        <fullName evidence="1">UDP-MurNAc-pentapeptide phosphotransferase</fullName>
    </alternativeName>
</protein>
<evidence type="ECO:0000255" key="1">
    <source>
        <dbReference type="HAMAP-Rule" id="MF_00038"/>
    </source>
</evidence>
<keyword id="KW-0131">Cell cycle</keyword>
<keyword id="KW-0132">Cell division</keyword>
<keyword id="KW-0997">Cell inner membrane</keyword>
<keyword id="KW-1003">Cell membrane</keyword>
<keyword id="KW-0133">Cell shape</keyword>
<keyword id="KW-0961">Cell wall biogenesis/degradation</keyword>
<keyword id="KW-0460">Magnesium</keyword>
<keyword id="KW-0472">Membrane</keyword>
<keyword id="KW-0479">Metal-binding</keyword>
<keyword id="KW-0573">Peptidoglycan synthesis</keyword>
<keyword id="KW-1185">Reference proteome</keyword>
<keyword id="KW-0808">Transferase</keyword>
<keyword id="KW-0812">Transmembrane</keyword>
<keyword id="KW-1133">Transmembrane helix</keyword>
<reference key="1">
    <citation type="journal article" date="2004" name="Science">
        <title>Illuminating the evolutionary history of chlamydiae.</title>
        <authorList>
            <person name="Horn M."/>
            <person name="Collingro A."/>
            <person name="Schmitz-Esser S."/>
            <person name="Beier C.L."/>
            <person name="Purkhold U."/>
            <person name="Fartmann B."/>
            <person name="Brandt P."/>
            <person name="Nyakatura G.J."/>
            <person name="Droege M."/>
            <person name="Frishman D."/>
            <person name="Rattei T."/>
            <person name="Mewes H.-W."/>
            <person name="Wagner M."/>
        </authorList>
    </citation>
    <scope>NUCLEOTIDE SEQUENCE [LARGE SCALE GENOMIC DNA]</scope>
    <source>
        <strain>UWE25</strain>
    </source>
</reference>
<gene>
    <name evidence="1" type="primary">mraY</name>
    <name type="ordered locus">pc1252</name>
</gene>
<dbReference type="EC" id="2.7.8.13" evidence="1"/>
<dbReference type="EMBL" id="BX908798">
    <property type="protein sequence ID" value="CAF23976.1"/>
    <property type="molecule type" value="Genomic_DNA"/>
</dbReference>
<dbReference type="RefSeq" id="WP_011175802.1">
    <property type="nucleotide sequence ID" value="NC_005861.2"/>
</dbReference>
<dbReference type="SMR" id="Q6MBS3"/>
<dbReference type="STRING" id="264201.pc1252"/>
<dbReference type="KEGG" id="pcu:PC_RS06035"/>
<dbReference type="eggNOG" id="COG0472">
    <property type="taxonomic scope" value="Bacteria"/>
</dbReference>
<dbReference type="HOGENOM" id="CLU_023982_0_0_0"/>
<dbReference type="OrthoDB" id="9805475at2"/>
<dbReference type="UniPathway" id="UPA00219"/>
<dbReference type="Proteomes" id="UP000000529">
    <property type="component" value="Chromosome"/>
</dbReference>
<dbReference type="GO" id="GO:0005886">
    <property type="term" value="C:plasma membrane"/>
    <property type="evidence" value="ECO:0007669"/>
    <property type="project" value="UniProtKB-SubCell"/>
</dbReference>
<dbReference type="GO" id="GO:0046872">
    <property type="term" value="F:metal ion binding"/>
    <property type="evidence" value="ECO:0007669"/>
    <property type="project" value="UniProtKB-KW"/>
</dbReference>
<dbReference type="GO" id="GO:0008963">
    <property type="term" value="F:phospho-N-acetylmuramoyl-pentapeptide-transferase activity"/>
    <property type="evidence" value="ECO:0007669"/>
    <property type="project" value="UniProtKB-UniRule"/>
</dbReference>
<dbReference type="GO" id="GO:0051992">
    <property type="term" value="F:UDP-N-acetylmuramoyl-L-alanyl-D-glutamyl-meso-2,6-diaminopimelyl-D-alanyl-D-alanine:undecaprenyl-phosphate transferase activity"/>
    <property type="evidence" value="ECO:0007669"/>
    <property type="project" value="RHEA"/>
</dbReference>
<dbReference type="GO" id="GO:0051301">
    <property type="term" value="P:cell division"/>
    <property type="evidence" value="ECO:0007669"/>
    <property type="project" value="UniProtKB-KW"/>
</dbReference>
<dbReference type="GO" id="GO:0071555">
    <property type="term" value="P:cell wall organization"/>
    <property type="evidence" value="ECO:0007669"/>
    <property type="project" value="UniProtKB-KW"/>
</dbReference>
<dbReference type="GO" id="GO:0009252">
    <property type="term" value="P:peptidoglycan biosynthetic process"/>
    <property type="evidence" value="ECO:0007669"/>
    <property type="project" value="UniProtKB-UniRule"/>
</dbReference>
<dbReference type="GO" id="GO:0008360">
    <property type="term" value="P:regulation of cell shape"/>
    <property type="evidence" value="ECO:0007669"/>
    <property type="project" value="UniProtKB-KW"/>
</dbReference>
<dbReference type="CDD" id="cd06852">
    <property type="entry name" value="GT_MraY"/>
    <property type="match status" value="1"/>
</dbReference>
<dbReference type="HAMAP" id="MF_00038">
    <property type="entry name" value="MraY"/>
    <property type="match status" value="1"/>
</dbReference>
<dbReference type="InterPro" id="IPR000715">
    <property type="entry name" value="Glycosyl_transferase_4"/>
</dbReference>
<dbReference type="InterPro" id="IPR003524">
    <property type="entry name" value="PNAcMuramoyl-5peptid_Trfase"/>
</dbReference>
<dbReference type="InterPro" id="IPR018480">
    <property type="entry name" value="PNAcMuramoyl-5peptid_Trfase_CS"/>
</dbReference>
<dbReference type="NCBIfam" id="TIGR00445">
    <property type="entry name" value="mraY"/>
    <property type="match status" value="1"/>
</dbReference>
<dbReference type="PANTHER" id="PTHR22926">
    <property type="entry name" value="PHOSPHO-N-ACETYLMURAMOYL-PENTAPEPTIDE-TRANSFERASE"/>
    <property type="match status" value="1"/>
</dbReference>
<dbReference type="PANTHER" id="PTHR22926:SF5">
    <property type="entry name" value="PHOSPHO-N-ACETYLMURAMOYL-PENTAPEPTIDE-TRANSFERASE HOMOLOG"/>
    <property type="match status" value="1"/>
</dbReference>
<dbReference type="Pfam" id="PF00953">
    <property type="entry name" value="Glycos_transf_4"/>
    <property type="match status" value="1"/>
</dbReference>
<dbReference type="Pfam" id="PF10555">
    <property type="entry name" value="MraY_sig1"/>
    <property type="match status" value="1"/>
</dbReference>
<dbReference type="PROSITE" id="PS01347">
    <property type="entry name" value="MRAY_1"/>
    <property type="match status" value="1"/>
</dbReference>
<dbReference type="PROSITE" id="PS01348">
    <property type="entry name" value="MRAY_2"/>
    <property type="match status" value="1"/>
</dbReference>
<proteinExistence type="inferred from homology"/>
<accession>Q6MBS3</accession>
<feature type="chain" id="PRO_0000108862" description="Phospho-N-acetylmuramoyl-pentapeptide-transferase">
    <location>
        <begin position="1"/>
        <end position="410"/>
    </location>
</feature>
<feature type="transmembrane region" description="Helical" evidence="1">
    <location>
        <begin position="27"/>
        <end position="47"/>
    </location>
</feature>
<feature type="transmembrane region" description="Helical" evidence="1">
    <location>
        <begin position="77"/>
        <end position="97"/>
    </location>
</feature>
<feature type="transmembrane region" description="Helical" evidence="1">
    <location>
        <begin position="99"/>
        <end position="119"/>
    </location>
</feature>
<feature type="transmembrane region" description="Helical" evidence="1">
    <location>
        <begin position="140"/>
        <end position="160"/>
    </location>
</feature>
<feature type="transmembrane region" description="Helical" evidence="1">
    <location>
        <begin position="213"/>
        <end position="233"/>
    </location>
</feature>
<feature type="transmembrane region" description="Helical" evidence="1">
    <location>
        <begin position="248"/>
        <end position="268"/>
    </location>
</feature>
<feature type="transmembrane region" description="Helical" evidence="1">
    <location>
        <begin position="288"/>
        <end position="308"/>
    </location>
</feature>
<feature type="transmembrane region" description="Helical" evidence="1">
    <location>
        <begin position="312"/>
        <end position="332"/>
    </location>
</feature>
<feature type="transmembrane region" description="Helical" evidence="1">
    <location>
        <begin position="337"/>
        <end position="357"/>
    </location>
</feature>
<feature type="transmembrane region" description="Helical" evidence="1">
    <location>
        <begin position="389"/>
        <end position="409"/>
    </location>
</feature>
<organism>
    <name type="scientific">Protochlamydia amoebophila (strain UWE25)</name>
    <dbReference type="NCBI Taxonomy" id="264201"/>
    <lineage>
        <taxon>Bacteria</taxon>
        <taxon>Pseudomonadati</taxon>
        <taxon>Chlamydiota</taxon>
        <taxon>Chlamydiia</taxon>
        <taxon>Parachlamydiales</taxon>
        <taxon>Parachlamydiaceae</taxon>
        <taxon>Candidatus Protochlamydia</taxon>
    </lineage>
</organism>